<organism>
    <name type="scientific">Drosophila melanogaster</name>
    <name type="common">Fruit fly</name>
    <dbReference type="NCBI Taxonomy" id="7227"/>
    <lineage>
        <taxon>Eukaryota</taxon>
        <taxon>Metazoa</taxon>
        <taxon>Ecdysozoa</taxon>
        <taxon>Arthropoda</taxon>
        <taxon>Hexapoda</taxon>
        <taxon>Insecta</taxon>
        <taxon>Pterygota</taxon>
        <taxon>Neoptera</taxon>
        <taxon>Endopterygota</taxon>
        <taxon>Diptera</taxon>
        <taxon>Brachycera</taxon>
        <taxon>Muscomorpha</taxon>
        <taxon>Ephydroidea</taxon>
        <taxon>Drosophilidae</taxon>
        <taxon>Drosophila</taxon>
        <taxon>Sophophora</taxon>
    </lineage>
</organism>
<reference key="1">
    <citation type="journal article" date="1997" name="Mol. Gen. Genet.">
        <title>Antisense suppression of the putative ribosomal protein S3A gene disrupts ovarian development in Drosophila melanogaster.</title>
        <authorList>
            <person name="Reynaud E."/>
            <person name="Bolshakov V.N."/>
            <person name="Barajas V.N."/>
            <person name="Kafatos F.C."/>
            <person name="Zurita M."/>
        </authorList>
    </citation>
    <scope>NUCLEOTIDE SEQUENCE [MRNA] (ISOFORM A)</scope>
    <scope>FUNCTION</scope>
    <scope>SUBCELLULAR LOCATION</scope>
    <scope>TISSUE SPECIFICITY</scope>
    <scope>DISRUPTION PHENOTYPE</scope>
    <source>
        <strain>Oregon-R</strain>
        <tissue>Embryo</tissue>
    </source>
</reference>
<reference key="2">
    <citation type="journal article" date="1998" name="Nucleic Acids Res.">
        <title>Drosophila RpS3a, a novel minute gene situated between the segment polarity genes cubitus interruptus and dTCF.</title>
        <authorList>
            <person name="van Beest M."/>
            <person name="Mortin M."/>
            <person name="Clevers H."/>
        </authorList>
    </citation>
    <scope>NUCLEOTIDE SEQUENCE [MRNA] (ISOFORM A)</scope>
    <scope>DEVELOPMENTAL STAGE</scope>
    <source>
        <strain>Berkeley</strain>
        <tissue>Embryo</tissue>
    </source>
</reference>
<reference key="3">
    <citation type="journal article" date="2000" name="Science">
        <title>The genome sequence of Drosophila melanogaster.</title>
        <authorList>
            <person name="Adams M.D."/>
            <person name="Celniker S.E."/>
            <person name="Holt R.A."/>
            <person name="Evans C.A."/>
            <person name="Gocayne J.D."/>
            <person name="Amanatides P.G."/>
            <person name="Scherer S.E."/>
            <person name="Li P.W."/>
            <person name="Hoskins R.A."/>
            <person name="Galle R.F."/>
            <person name="George R.A."/>
            <person name="Lewis S.E."/>
            <person name="Richards S."/>
            <person name="Ashburner M."/>
            <person name="Henderson S.N."/>
            <person name="Sutton G.G."/>
            <person name="Wortman J.R."/>
            <person name="Yandell M.D."/>
            <person name="Zhang Q."/>
            <person name="Chen L.X."/>
            <person name="Brandon R.C."/>
            <person name="Rogers Y.-H.C."/>
            <person name="Blazej R.G."/>
            <person name="Champe M."/>
            <person name="Pfeiffer B.D."/>
            <person name="Wan K.H."/>
            <person name="Doyle C."/>
            <person name="Baxter E.G."/>
            <person name="Helt G."/>
            <person name="Nelson C.R."/>
            <person name="Miklos G.L.G."/>
            <person name="Abril J.F."/>
            <person name="Agbayani A."/>
            <person name="An H.-J."/>
            <person name="Andrews-Pfannkoch C."/>
            <person name="Baldwin D."/>
            <person name="Ballew R.M."/>
            <person name="Basu A."/>
            <person name="Baxendale J."/>
            <person name="Bayraktaroglu L."/>
            <person name="Beasley E.M."/>
            <person name="Beeson K.Y."/>
            <person name="Benos P.V."/>
            <person name="Berman B.P."/>
            <person name="Bhandari D."/>
            <person name="Bolshakov S."/>
            <person name="Borkova D."/>
            <person name="Botchan M.R."/>
            <person name="Bouck J."/>
            <person name="Brokstein P."/>
            <person name="Brottier P."/>
            <person name="Burtis K.C."/>
            <person name="Busam D.A."/>
            <person name="Butler H."/>
            <person name="Cadieu E."/>
            <person name="Center A."/>
            <person name="Chandra I."/>
            <person name="Cherry J.M."/>
            <person name="Cawley S."/>
            <person name="Dahlke C."/>
            <person name="Davenport L.B."/>
            <person name="Davies P."/>
            <person name="de Pablos B."/>
            <person name="Delcher A."/>
            <person name="Deng Z."/>
            <person name="Mays A.D."/>
            <person name="Dew I."/>
            <person name="Dietz S.M."/>
            <person name="Dodson K."/>
            <person name="Doup L.E."/>
            <person name="Downes M."/>
            <person name="Dugan-Rocha S."/>
            <person name="Dunkov B.C."/>
            <person name="Dunn P."/>
            <person name="Durbin K.J."/>
            <person name="Evangelista C.C."/>
            <person name="Ferraz C."/>
            <person name="Ferriera S."/>
            <person name="Fleischmann W."/>
            <person name="Fosler C."/>
            <person name="Gabrielian A.E."/>
            <person name="Garg N.S."/>
            <person name="Gelbart W.M."/>
            <person name="Glasser K."/>
            <person name="Glodek A."/>
            <person name="Gong F."/>
            <person name="Gorrell J.H."/>
            <person name="Gu Z."/>
            <person name="Guan P."/>
            <person name="Harris M."/>
            <person name="Harris N.L."/>
            <person name="Harvey D.A."/>
            <person name="Heiman T.J."/>
            <person name="Hernandez J.R."/>
            <person name="Houck J."/>
            <person name="Hostin D."/>
            <person name="Houston K.A."/>
            <person name="Howland T.J."/>
            <person name="Wei M.-H."/>
            <person name="Ibegwam C."/>
            <person name="Jalali M."/>
            <person name="Kalush F."/>
            <person name="Karpen G.H."/>
            <person name="Ke Z."/>
            <person name="Kennison J.A."/>
            <person name="Ketchum K.A."/>
            <person name="Kimmel B.E."/>
            <person name="Kodira C.D."/>
            <person name="Kraft C.L."/>
            <person name="Kravitz S."/>
            <person name="Kulp D."/>
            <person name="Lai Z."/>
            <person name="Lasko P."/>
            <person name="Lei Y."/>
            <person name="Levitsky A.A."/>
            <person name="Li J.H."/>
            <person name="Li Z."/>
            <person name="Liang Y."/>
            <person name="Lin X."/>
            <person name="Liu X."/>
            <person name="Mattei B."/>
            <person name="McIntosh T.C."/>
            <person name="McLeod M.P."/>
            <person name="McPherson D."/>
            <person name="Merkulov G."/>
            <person name="Milshina N.V."/>
            <person name="Mobarry C."/>
            <person name="Morris J."/>
            <person name="Moshrefi A."/>
            <person name="Mount S.M."/>
            <person name="Moy M."/>
            <person name="Murphy B."/>
            <person name="Murphy L."/>
            <person name="Muzny D.M."/>
            <person name="Nelson D.L."/>
            <person name="Nelson D.R."/>
            <person name="Nelson K.A."/>
            <person name="Nixon K."/>
            <person name="Nusskern D.R."/>
            <person name="Pacleb J.M."/>
            <person name="Palazzolo M."/>
            <person name="Pittman G.S."/>
            <person name="Pan S."/>
            <person name="Pollard J."/>
            <person name="Puri V."/>
            <person name="Reese M.G."/>
            <person name="Reinert K."/>
            <person name="Remington K."/>
            <person name="Saunders R.D.C."/>
            <person name="Scheeler F."/>
            <person name="Shen H."/>
            <person name="Shue B.C."/>
            <person name="Siden-Kiamos I."/>
            <person name="Simpson M."/>
            <person name="Skupski M.P."/>
            <person name="Smith T.J."/>
            <person name="Spier E."/>
            <person name="Spradling A.C."/>
            <person name="Stapleton M."/>
            <person name="Strong R."/>
            <person name="Sun E."/>
            <person name="Svirskas R."/>
            <person name="Tector C."/>
            <person name="Turner R."/>
            <person name="Venter E."/>
            <person name="Wang A.H."/>
            <person name="Wang X."/>
            <person name="Wang Z.-Y."/>
            <person name="Wassarman D.A."/>
            <person name="Weinstock G.M."/>
            <person name="Weissenbach J."/>
            <person name="Williams S.M."/>
            <person name="Woodage T."/>
            <person name="Worley K.C."/>
            <person name="Wu D."/>
            <person name="Yang S."/>
            <person name="Yao Q.A."/>
            <person name="Ye J."/>
            <person name="Yeh R.-F."/>
            <person name="Zaveri J.S."/>
            <person name="Zhan M."/>
            <person name="Zhang G."/>
            <person name="Zhao Q."/>
            <person name="Zheng L."/>
            <person name="Zheng X.H."/>
            <person name="Zhong F.N."/>
            <person name="Zhong W."/>
            <person name="Zhou X."/>
            <person name="Zhu S.C."/>
            <person name="Zhu X."/>
            <person name="Smith H.O."/>
            <person name="Gibbs R.A."/>
            <person name="Myers E.W."/>
            <person name="Rubin G.M."/>
            <person name="Venter J.C."/>
        </authorList>
    </citation>
    <scope>NUCLEOTIDE SEQUENCE [LARGE SCALE GENOMIC DNA]</scope>
    <source>
        <strain>Berkeley</strain>
    </source>
</reference>
<reference key="4">
    <citation type="journal article" date="2002" name="Genome Biol.">
        <title>Annotation of the Drosophila melanogaster euchromatic genome: a systematic review.</title>
        <authorList>
            <person name="Misra S."/>
            <person name="Crosby M.A."/>
            <person name="Mungall C.J."/>
            <person name="Matthews B.B."/>
            <person name="Campbell K.S."/>
            <person name="Hradecky P."/>
            <person name="Huang Y."/>
            <person name="Kaminker J.S."/>
            <person name="Millburn G.H."/>
            <person name="Prochnik S.E."/>
            <person name="Smith C.D."/>
            <person name="Tupy J.L."/>
            <person name="Whitfield E.J."/>
            <person name="Bayraktaroglu L."/>
            <person name="Berman B.P."/>
            <person name="Bettencourt B.R."/>
            <person name="Celniker S.E."/>
            <person name="de Grey A.D.N.J."/>
            <person name="Drysdale R.A."/>
            <person name="Harris N.L."/>
            <person name="Richter J."/>
            <person name="Russo S."/>
            <person name="Schroeder A.J."/>
            <person name="Shu S.Q."/>
            <person name="Stapleton M."/>
            <person name="Yamada C."/>
            <person name="Ashburner M."/>
            <person name="Gelbart W.M."/>
            <person name="Rubin G.M."/>
            <person name="Lewis S.E."/>
        </authorList>
    </citation>
    <scope>GENOME REANNOTATION</scope>
    <scope>ALTERNATIVE SPLICING</scope>
    <source>
        <strain>Berkeley</strain>
    </source>
</reference>
<reference key="5">
    <citation type="journal article" date="2002" name="Genome Biol.">
        <title>A Drosophila full-length cDNA resource.</title>
        <authorList>
            <person name="Stapleton M."/>
            <person name="Carlson J.W."/>
            <person name="Brokstein P."/>
            <person name="Yu C."/>
            <person name="Champe M."/>
            <person name="George R.A."/>
            <person name="Guarin H."/>
            <person name="Kronmiller B."/>
            <person name="Pacleb J.M."/>
            <person name="Park S."/>
            <person name="Wan K.H."/>
            <person name="Rubin G.M."/>
            <person name="Celniker S.E."/>
        </authorList>
    </citation>
    <scope>NUCLEOTIDE SEQUENCE [LARGE SCALE MRNA] (ISOFORM A)</scope>
    <source>
        <strain>Berkeley</strain>
        <tissue>Embryo</tissue>
    </source>
</reference>
<reference key="6">
    <citation type="submission" date="2009-05" db="EMBL/GenBank/DDBJ databases">
        <authorList>
            <person name="Carlson J.W."/>
            <person name="Booth B."/>
            <person name="Frise E."/>
            <person name="Park S."/>
            <person name="Wan K.H."/>
            <person name="Yu C."/>
            <person name="Celniker S.E."/>
        </authorList>
    </citation>
    <scope>NUCLEOTIDE SEQUENCE [LARGE SCALE MRNA] (ISOFORMS A AND B)</scope>
    <source>
        <strain>Berkeley</strain>
        <tissue>Embryo</tissue>
    </source>
</reference>
<reference key="7">
    <citation type="journal article" date="2013" name="Nature">
        <title>Structures of the human and Drosophila 80S ribosome.</title>
        <authorList>
            <person name="Anger A.M."/>
            <person name="Armache J.P."/>
            <person name="Berninghausen O."/>
            <person name="Habeck M."/>
            <person name="Subklewe M."/>
            <person name="Wilson D.N."/>
            <person name="Beckmann R."/>
        </authorList>
    </citation>
    <scope>STRUCTURE BY ELECTRON MICROSCOPY (6.0 ANGSTROMS) OF THE 80S RIBOSOME</scope>
</reference>
<feature type="initiator methionine" description="Removed" evidence="1">
    <location>
        <position position="1"/>
    </location>
</feature>
<feature type="chain" id="PRO_0000153529" description="Small ribosomal subunit protein eS1">
    <location>
        <begin position="2"/>
        <end position="268"/>
    </location>
</feature>
<feature type="region of interest" description="Disordered" evidence="2">
    <location>
        <begin position="1"/>
        <end position="21"/>
    </location>
</feature>
<feature type="splice variant" id="VSP_038423" description="In isoform B." evidence="5">
    <original>MAVGKNKGLSKGGKKGGKKKVVDPFSRKDWYDVKAPNMFQTRQIGKTLVNRTQGQRIASDYLK</original>
    <variation>MSKLRICFKPVKS</variation>
    <location>
        <begin position="1"/>
        <end position="63"/>
    </location>
</feature>
<feature type="sequence conflict" description="In Ref. 1; CAA71201." evidence="6" ref="1">
    <original>L</original>
    <variation>F</variation>
    <location>
        <position position="62"/>
    </location>
</feature>
<feature type="sequence conflict" description="In Ref. 1; CAA71201." evidence="6" ref="1">
    <original>A</original>
    <variation>VP</variation>
    <location>
        <position position="72"/>
    </location>
</feature>
<feature type="sequence conflict" description="In Ref. 1; CAA71201." evidence="6" ref="1">
    <original>R</original>
    <variation>H</variation>
    <location>
        <position position="82"/>
    </location>
</feature>
<feature type="sequence conflict" description="In Ref. 6; ADR66775." evidence="6" ref="6">
    <original>S</original>
    <variation>C</variation>
    <location>
        <position position="152"/>
    </location>
</feature>
<feature type="sequence conflict" description="In Ref. 1; CAA71201." evidence="6" ref="1">
    <original>QQ</original>
    <variation>HE</variation>
    <location>
        <begin position="160"/>
        <end position="161"/>
    </location>
</feature>
<feature type="sequence conflict" description="In Ref. 1; CAA71201." evidence="6" ref="1">
    <original>A</original>
    <variation>SG</variation>
    <location>
        <position position="169"/>
    </location>
</feature>
<feature type="sequence conflict" description="In Ref. 1; CAA71201." evidence="6" ref="1">
    <original>VIDRPEGYE</original>
    <variation>PKSTALKVK</variation>
    <location>
        <begin position="253"/>
        <end position="261"/>
    </location>
</feature>
<feature type="sequence conflict" description="In Ref. 1; CAA71201." evidence="6" ref="1">
    <original>A</original>
    <variation>S</variation>
    <location>
        <position position="267"/>
    </location>
</feature>
<gene>
    <name evidence="1" type="primary">RpS3A</name>
    <name type="synonym">C3</name>
    <name type="synonym">M(4)101</name>
    <name type="ORF">CG2168</name>
</gene>
<dbReference type="EMBL" id="Y10115">
    <property type="protein sequence ID" value="CAA71201.1"/>
    <property type="molecule type" value="mRNA"/>
</dbReference>
<dbReference type="EMBL" id="AF034971">
    <property type="protein sequence ID" value="AAC62117.1"/>
    <property type="molecule type" value="mRNA"/>
</dbReference>
<dbReference type="EMBL" id="AE014135">
    <property type="protein sequence ID" value="AAF59372.1"/>
    <property type="molecule type" value="Genomic_DNA"/>
</dbReference>
<dbReference type="EMBL" id="AE014135">
    <property type="protein sequence ID" value="AAN06541.1"/>
    <property type="molecule type" value="Genomic_DNA"/>
</dbReference>
<dbReference type="EMBL" id="AE014135">
    <property type="protein sequence ID" value="AFH06764.1"/>
    <property type="molecule type" value="Genomic_DNA"/>
</dbReference>
<dbReference type="EMBL" id="AY070949">
    <property type="protein sequence ID" value="AAL48571.1"/>
    <property type="status" value="ALT_FRAME"/>
    <property type="molecule type" value="mRNA"/>
</dbReference>
<dbReference type="EMBL" id="BT083412">
    <property type="protein sequence ID" value="ACQ89821.1"/>
    <property type="status" value="ALT_INIT"/>
    <property type="molecule type" value="mRNA"/>
</dbReference>
<dbReference type="EMBL" id="BT125801">
    <property type="protein sequence ID" value="ADR66775.1"/>
    <property type="status" value="ALT_INIT"/>
    <property type="molecule type" value="mRNA"/>
</dbReference>
<dbReference type="EMBL" id="BT132838">
    <property type="protein sequence ID" value="AEU08331.1"/>
    <property type="status" value="ALT_INIT"/>
    <property type="molecule type" value="mRNA"/>
</dbReference>
<dbReference type="RefSeq" id="NP_001245404.1">
    <molecule id="P55830-1"/>
    <property type="nucleotide sequence ID" value="NM_001258475.2"/>
</dbReference>
<dbReference type="RefSeq" id="NP_524618.1">
    <molecule id="P55830-1"/>
    <property type="nucleotide sequence ID" value="NM_079879.4"/>
</dbReference>
<dbReference type="RefSeq" id="NP_726518.1">
    <molecule id="P55830-2"/>
    <property type="nucleotide sequence ID" value="NM_166714.4"/>
</dbReference>
<dbReference type="PDB" id="4V6W">
    <property type="method" value="EM"/>
    <property type="resolution" value="6.00 A"/>
    <property type="chains" value="AB=1-268"/>
</dbReference>
<dbReference type="PDB" id="6XU6">
    <property type="method" value="EM"/>
    <property type="resolution" value="3.50 A"/>
    <property type="chains" value="AB=17-236"/>
</dbReference>
<dbReference type="PDB" id="6XU7">
    <property type="method" value="EM"/>
    <property type="resolution" value="4.90 A"/>
    <property type="chains" value="AB=17-236"/>
</dbReference>
<dbReference type="PDB" id="6XU8">
    <property type="method" value="EM"/>
    <property type="resolution" value="3.00 A"/>
    <property type="chains" value="AB=17-236"/>
</dbReference>
<dbReference type="PDBsum" id="4V6W"/>
<dbReference type="PDBsum" id="6XU6"/>
<dbReference type="PDBsum" id="6XU7"/>
<dbReference type="PDBsum" id="6XU8"/>
<dbReference type="EMDB" id="EMD-10622"/>
<dbReference type="EMDB" id="EMD-10623"/>
<dbReference type="EMDB" id="EMD-10624"/>
<dbReference type="SMR" id="P55830"/>
<dbReference type="BioGRID" id="68606">
    <property type="interactions" value="125"/>
</dbReference>
<dbReference type="FunCoup" id="P55830">
    <property type="interactions" value="927"/>
</dbReference>
<dbReference type="IntAct" id="P55830">
    <property type="interactions" value="3"/>
</dbReference>
<dbReference type="MINT" id="P55830"/>
<dbReference type="STRING" id="7227.FBpp0300615"/>
<dbReference type="PaxDb" id="7227-FBpp0300615"/>
<dbReference type="DNASU" id="43768"/>
<dbReference type="EnsemblMetazoa" id="FBtr0089175">
    <molecule id="P55830-1"/>
    <property type="protein sequence ID" value="FBpp0088242"/>
    <property type="gene ID" value="FBgn0017545"/>
</dbReference>
<dbReference type="EnsemblMetazoa" id="FBtr0089176">
    <molecule id="P55830-2"/>
    <property type="protein sequence ID" value="FBpp0088243"/>
    <property type="gene ID" value="FBgn0017545"/>
</dbReference>
<dbReference type="EnsemblMetazoa" id="FBtr0308296">
    <molecule id="P55830-1"/>
    <property type="protein sequence ID" value="FBpp0300615"/>
    <property type="gene ID" value="FBgn0017545"/>
</dbReference>
<dbReference type="GeneID" id="43768"/>
<dbReference type="KEGG" id="dme:Dmel_CG2168"/>
<dbReference type="UCSC" id="CG2168-RB">
    <property type="organism name" value="d. melanogaster"/>
</dbReference>
<dbReference type="UCSC" id="CG2168-RD">
    <property type="organism name" value="d. melanogaster"/>
</dbReference>
<dbReference type="AGR" id="FB:FBgn0017545"/>
<dbReference type="CTD" id="6189"/>
<dbReference type="FlyBase" id="FBgn0017545">
    <property type="gene designation" value="RpS3A"/>
</dbReference>
<dbReference type="VEuPathDB" id="VectorBase:FBgn0017545"/>
<dbReference type="eggNOG" id="KOG1628">
    <property type="taxonomic scope" value="Eukaryota"/>
</dbReference>
<dbReference type="GeneTree" id="ENSGT00390000018433"/>
<dbReference type="HOGENOM" id="CLU_062507_0_1_1"/>
<dbReference type="InParanoid" id="P55830"/>
<dbReference type="OMA" id="TRFKGHE"/>
<dbReference type="OrthoDB" id="9834376at2759"/>
<dbReference type="PhylomeDB" id="P55830"/>
<dbReference type="Reactome" id="R-DME-156827">
    <property type="pathway name" value="L13a-mediated translational silencing of Ceruloplasmin expression"/>
</dbReference>
<dbReference type="Reactome" id="R-DME-1799339">
    <property type="pathway name" value="SRP-dependent cotranslational protein targeting to membrane"/>
</dbReference>
<dbReference type="Reactome" id="R-DME-72649">
    <property type="pathway name" value="Translation initiation complex formation"/>
</dbReference>
<dbReference type="Reactome" id="R-DME-72689">
    <property type="pathway name" value="Formation of a pool of free 40S subunits"/>
</dbReference>
<dbReference type="Reactome" id="R-DME-72695">
    <property type="pathway name" value="Formation of the ternary complex, and subsequently, the 43S complex"/>
</dbReference>
<dbReference type="Reactome" id="R-DME-72702">
    <property type="pathway name" value="Ribosomal scanning and start codon recognition"/>
</dbReference>
<dbReference type="Reactome" id="R-DME-72706">
    <property type="pathway name" value="GTP hydrolysis and joining of the 60S ribosomal subunit"/>
</dbReference>
<dbReference type="Reactome" id="R-DME-975956">
    <property type="pathway name" value="Nonsense Mediated Decay (NMD) independent of the Exon Junction Complex (EJC)"/>
</dbReference>
<dbReference type="Reactome" id="R-DME-975957">
    <property type="pathway name" value="Nonsense Mediated Decay (NMD) enhanced by the Exon Junction Complex (EJC)"/>
</dbReference>
<dbReference type="BioGRID-ORCS" id="43768">
    <property type="hits" value="1 hit in 1 CRISPR screen"/>
</dbReference>
<dbReference type="ChiTaRS" id="RpS3A">
    <property type="organism name" value="fly"/>
</dbReference>
<dbReference type="GenomeRNAi" id="43768"/>
<dbReference type="PRO" id="PR:P55830"/>
<dbReference type="Proteomes" id="UP000000803">
    <property type="component" value="Chromosome 4"/>
</dbReference>
<dbReference type="Bgee" id="FBgn0017545">
    <property type="expression patterns" value="Expressed in eye disc (Drosophila) and 293 other cell types or tissues"/>
</dbReference>
<dbReference type="GO" id="GO:0005829">
    <property type="term" value="C:cytosol"/>
    <property type="evidence" value="ECO:0000318"/>
    <property type="project" value="GO_Central"/>
</dbReference>
<dbReference type="GO" id="GO:0022626">
    <property type="term" value="C:cytosolic ribosome"/>
    <property type="evidence" value="ECO:0000314"/>
    <property type="project" value="FlyBase"/>
</dbReference>
<dbReference type="GO" id="GO:0022627">
    <property type="term" value="C:cytosolic small ribosomal subunit"/>
    <property type="evidence" value="ECO:0000304"/>
    <property type="project" value="FlyBase"/>
</dbReference>
<dbReference type="GO" id="GO:0003735">
    <property type="term" value="F:structural constituent of ribosome"/>
    <property type="evidence" value="ECO:0000314"/>
    <property type="project" value="FlyBase"/>
</dbReference>
<dbReference type="GO" id="GO:0002181">
    <property type="term" value="P:cytoplasmic translation"/>
    <property type="evidence" value="ECO:0000304"/>
    <property type="project" value="FlyBase"/>
</dbReference>
<dbReference type="GO" id="GO:0048477">
    <property type="term" value="P:oogenesis"/>
    <property type="evidence" value="ECO:0007669"/>
    <property type="project" value="UniProtKB-KW"/>
</dbReference>
<dbReference type="HAMAP" id="MF_03122">
    <property type="entry name" value="Ribosomal_eS1_euk"/>
    <property type="match status" value="1"/>
</dbReference>
<dbReference type="InterPro" id="IPR001593">
    <property type="entry name" value="Ribosomal_eS1"/>
</dbReference>
<dbReference type="InterPro" id="IPR018281">
    <property type="entry name" value="Ribosomal_eS1_CS"/>
</dbReference>
<dbReference type="InterPro" id="IPR027500">
    <property type="entry name" value="Ribosomal_eS1_euk"/>
</dbReference>
<dbReference type="PANTHER" id="PTHR11830">
    <property type="entry name" value="40S RIBOSOMAL PROTEIN S3A"/>
    <property type="match status" value="1"/>
</dbReference>
<dbReference type="Pfam" id="PF01015">
    <property type="entry name" value="Ribosomal_S3Ae"/>
    <property type="match status" value="1"/>
</dbReference>
<dbReference type="SMART" id="SM01397">
    <property type="entry name" value="Ribosomal_S3Ae"/>
    <property type="match status" value="1"/>
</dbReference>
<dbReference type="PROSITE" id="PS01191">
    <property type="entry name" value="RIBOSOMAL_S3AE"/>
    <property type="match status" value="1"/>
</dbReference>
<sequence>MAVGKNKGLSKGGKKGGKKKVVDPFSRKDWYDVKAPNMFQTRQIGKTLVNRTQGQRIASDYLKGRVFEVSLADLQKDIDPERSFRKFRLIAEDVQDRNVLCNFHGMDLTTDKYRSMVKKWQTLIEAIVEAKTVDGYLLRVFCIGFTAKDQQSQRKTCYAQQSQVRKIRARMTDIITNEVSGADLKQLVNKLALDSIAKDIEKSCQRIYPLHDVYIRKVKVLKKPRFDVSKLLELHGDGGGKSVEAVVSSEGAVIDRPEGYEPPVQEAV</sequence>
<comment type="function">
    <text evidence="1 3">Essential for oogenesis; required for late follicle cell development.</text>
</comment>
<comment type="subunit">
    <text evidence="1">Component of the small ribosomal subunit. Mature ribosomes consist of a small (40S) and a large (60S) subunit. The 40S subunit contains about 33 different proteins and 1 molecule of RNA (18S). The 60S subunit contains about 49 different proteins and 3 molecules of RNA (28S, 5.8S and 5S).</text>
</comment>
<comment type="subcellular location">
    <subcellularLocation>
        <location evidence="1 3">Cytoplasm</location>
    </subcellularLocation>
</comment>
<comment type="alternative products">
    <event type="alternative splicing"/>
    <event type="alternative initiation"/>
    <isoform>
        <id>P55830-1</id>
        <name>A</name>
        <name>F</name>
        <sequence type="displayed"/>
    </isoform>
    <isoform>
        <id>P55830-2</id>
        <name>B</name>
        <sequence type="described" ref="VSP_038423"/>
    </isoform>
</comment>
<comment type="tissue specificity">
    <text evidence="3">Ubiquitously expressed in stage 8 embryos. During oogenesis, expression is located basally in somatic follicular epithelium and in the oocyte at the later stages.</text>
</comment>
<comment type="developmental stage">
    <text evidence="4">Expressed both maternally and zygotically throughout all development.</text>
</comment>
<comment type="disruption phenotype">
    <text evidence="3">Flies exhibit disappearance of the follicular cells of the ovary and abnormalities of the associated germline derivatives, leading to failure of egg production.</text>
</comment>
<comment type="miscellaneous">
    <molecule>Isoform B</molecule>
    <text evidence="6">Produced by alternative splicing.</text>
</comment>
<comment type="similarity">
    <text evidence="1">Belongs to the eukaryotic ribosomal protein eS1 family.</text>
</comment>
<comment type="sequence caution" evidence="6">
    <conflict type="frameshift">
        <sequence resource="EMBL-CDS" id="AAL48571"/>
    </conflict>
</comment>
<comment type="sequence caution" evidence="6">
    <conflict type="erroneous initiation">
        <sequence resource="EMBL-CDS" id="ACQ89821"/>
    </conflict>
    <text>Extended N-terminus.</text>
</comment>
<comment type="sequence caution" evidence="6">
    <conflict type="erroneous initiation">
        <sequence resource="EMBL-CDS" id="ADR66775"/>
    </conflict>
    <text>Extended N-terminus.</text>
</comment>
<comment type="sequence caution" evidence="6">
    <conflict type="erroneous initiation">
        <sequence resource="EMBL-CDS" id="AEU08331"/>
    </conflict>
    <text>Extended N-terminus.</text>
</comment>
<accession>P55830</accession>
<accession>C4IXY1</accession>
<accession>E4NKK4</accession>
<accession>H0RNB6</accession>
<accession>H9XVL9</accession>
<accession>O44389</accession>
<accession>Q8IMA9</accession>
<accession>Q8IMB0</accession>
<accession>Q8SZD2</accession>
<accession>Q9V4A9</accession>
<name>RS3A_DROME</name>
<keyword id="KW-0002">3D-structure</keyword>
<keyword id="KW-0024">Alternative initiation</keyword>
<keyword id="KW-0025">Alternative splicing</keyword>
<keyword id="KW-0963">Cytoplasm</keyword>
<keyword id="KW-0217">Developmental protein</keyword>
<keyword id="KW-0221">Differentiation</keyword>
<keyword id="KW-0896">Oogenesis</keyword>
<keyword id="KW-1185">Reference proteome</keyword>
<keyword id="KW-0687">Ribonucleoprotein</keyword>
<keyword id="KW-0689">Ribosomal protein</keyword>
<proteinExistence type="evidence at protein level"/>
<evidence type="ECO:0000255" key="1">
    <source>
        <dbReference type="HAMAP-Rule" id="MF_03122"/>
    </source>
</evidence>
<evidence type="ECO:0000256" key="2">
    <source>
        <dbReference type="SAM" id="MobiDB-lite"/>
    </source>
</evidence>
<evidence type="ECO:0000269" key="3">
    <source>
    </source>
</evidence>
<evidence type="ECO:0000269" key="4">
    <source>
    </source>
</evidence>
<evidence type="ECO:0000303" key="5">
    <source ref="6"/>
</evidence>
<evidence type="ECO:0000305" key="6"/>
<protein>
    <recommendedName>
        <fullName evidence="1">Small ribosomal subunit protein eS1</fullName>
    </recommendedName>
    <alternativeName>
        <fullName evidence="6">40S ribosomal protein S3a</fullName>
    </alternativeName>
    <alternativeName>
        <fullName>C3 protein</fullName>
    </alternativeName>
</protein>